<accession>P0CD85</accession>
<accession>O84519</accession>
<accession>P28536</accession>
<proteinExistence type="inferred from homology"/>
<gene>
    <name evidence="1" type="primary">rplR</name>
    <name type="synonym">rl18</name>
    <name type="ordered locus">CT_513</name>
</gene>
<keyword id="KW-1185">Reference proteome</keyword>
<keyword id="KW-0687">Ribonucleoprotein</keyword>
<keyword id="KW-0689">Ribosomal protein</keyword>
<keyword id="KW-0694">RNA-binding</keyword>
<keyword id="KW-0699">rRNA-binding</keyword>
<protein>
    <recommendedName>
        <fullName evidence="1">Large ribosomal subunit protein uL18</fullName>
    </recommendedName>
    <alternativeName>
        <fullName evidence="2">50S ribosomal protein L18</fullName>
    </alternativeName>
</protein>
<sequence length="123" mass="13319">MESSLYKKTSGKARRALRVRKALKGCSLKPRLSVVKTNKHVYVQLIDDVEGKTLASISTLAKVAKTSGLTRKNQDNAKALGIKIAELGKGLQVDRVVFDRGAHKYHGVVAMVADGAREGGLQF</sequence>
<feature type="chain" id="PRO_0000131246" description="Large ribosomal subunit protein uL18">
    <location>
        <begin position="1"/>
        <end position="123"/>
    </location>
</feature>
<evidence type="ECO:0000255" key="1">
    <source>
        <dbReference type="HAMAP-Rule" id="MF_01337"/>
    </source>
</evidence>
<evidence type="ECO:0000305" key="2"/>
<comment type="function">
    <text evidence="1">This is one of the proteins that bind and probably mediate the attachment of the 5S RNA into the large ribosomal subunit, where it forms part of the central protuberance.</text>
</comment>
<comment type="subunit">
    <text evidence="1">Part of the 50S ribosomal subunit; part of the 5S rRNA/L5/L18/L25 subcomplex. Contacts the 5S and 23S rRNAs.</text>
</comment>
<comment type="similarity">
    <text evidence="1">Belongs to the universal ribosomal protein uL18 family.</text>
</comment>
<organism>
    <name type="scientific">Chlamydia trachomatis serovar D (strain ATCC VR-885 / DSM 19411 / UW-3/Cx)</name>
    <dbReference type="NCBI Taxonomy" id="272561"/>
    <lineage>
        <taxon>Bacteria</taxon>
        <taxon>Pseudomonadati</taxon>
        <taxon>Chlamydiota</taxon>
        <taxon>Chlamydiia</taxon>
        <taxon>Chlamydiales</taxon>
        <taxon>Chlamydiaceae</taxon>
        <taxon>Chlamydia/Chlamydophila group</taxon>
        <taxon>Chlamydia</taxon>
    </lineage>
</organism>
<reference key="1">
    <citation type="journal article" date="1998" name="Science">
        <title>Genome sequence of an obligate intracellular pathogen of humans: Chlamydia trachomatis.</title>
        <authorList>
            <person name="Stephens R.S."/>
            <person name="Kalman S."/>
            <person name="Lammel C.J."/>
            <person name="Fan J."/>
            <person name="Marathe R."/>
            <person name="Aravind L."/>
            <person name="Mitchell W.P."/>
            <person name="Olinger L."/>
            <person name="Tatusov R.L."/>
            <person name="Zhao Q."/>
            <person name="Koonin E.V."/>
            <person name="Davis R.W."/>
        </authorList>
    </citation>
    <scope>NUCLEOTIDE SEQUENCE [LARGE SCALE GENOMIC DNA]</scope>
    <source>
        <strain>ATCC VR-885 / DSM 19411 / UW-3/Cx</strain>
    </source>
</reference>
<name>RL18_CHLTR</name>
<dbReference type="EMBL" id="AE001273">
    <property type="protein sequence ID" value="AAC68114.1"/>
    <property type="molecule type" value="Genomic_DNA"/>
</dbReference>
<dbReference type="PIR" id="I42645">
    <property type="entry name" value="I42645"/>
</dbReference>
<dbReference type="RefSeq" id="NP_220028.1">
    <property type="nucleotide sequence ID" value="NC_000117.1"/>
</dbReference>
<dbReference type="RefSeq" id="WP_009871877.1">
    <property type="nucleotide sequence ID" value="NC_000117.1"/>
</dbReference>
<dbReference type="SMR" id="P0CD85"/>
<dbReference type="FunCoup" id="P0CD85">
    <property type="interactions" value="270"/>
</dbReference>
<dbReference type="STRING" id="272561.CT_513"/>
<dbReference type="EnsemblBacteria" id="AAC68114">
    <property type="protein sequence ID" value="AAC68114"/>
    <property type="gene ID" value="CT_513"/>
</dbReference>
<dbReference type="GeneID" id="884288"/>
<dbReference type="KEGG" id="ctr:CT_513"/>
<dbReference type="PATRIC" id="fig|272561.5.peg.557"/>
<dbReference type="HOGENOM" id="CLU_098841_0_1_0"/>
<dbReference type="InParanoid" id="P0CD85"/>
<dbReference type="OrthoDB" id="9810939at2"/>
<dbReference type="Proteomes" id="UP000000431">
    <property type="component" value="Chromosome"/>
</dbReference>
<dbReference type="GO" id="GO:0022625">
    <property type="term" value="C:cytosolic large ribosomal subunit"/>
    <property type="evidence" value="ECO:0000318"/>
    <property type="project" value="GO_Central"/>
</dbReference>
<dbReference type="GO" id="GO:0008097">
    <property type="term" value="F:5S rRNA binding"/>
    <property type="evidence" value="ECO:0000318"/>
    <property type="project" value="GO_Central"/>
</dbReference>
<dbReference type="GO" id="GO:0003735">
    <property type="term" value="F:structural constituent of ribosome"/>
    <property type="evidence" value="ECO:0007669"/>
    <property type="project" value="InterPro"/>
</dbReference>
<dbReference type="GO" id="GO:0006412">
    <property type="term" value="P:translation"/>
    <property type="evidence" value="ECO:0007669"/>
    <property type="project" value="UniProtKB-UniRule"/>
</dbReference>
<dbReference type="CDD" id="cd00432">
    <property type="entry name" value="Ribosomal_L18_L5e"/>
    <property type="match status" value="1"/>
</dbReference>
<dbReference type="FunFam" id="3.30.420.100:FF:000001">
    <property type="entry name" value="50S ribosomal protein L18"/>
    <property type="match status" value="1"/>
</dbReference>
<dbReference type="Gene3D" id="3.30.420.100">
    <property type="match status" value="1"/>
</dbReference>
<dbReference type="HAMAP" id="MF_01337_B">
    <property type="entry name" value="Ribosomal_uL18_B"/>
    <property type="match status" value="1"/>
</dbReference>
<dbReference type="InterPro" id="IPR004389">
    <property type="entry name" value="Ribosomal_uL18_bac-type"/>
</dbReference>
<dbReference type="InterPro" id="IPR005484">
    <property type="entry name" value="Ribosomal_uL18_bac/euk"/>
</dbReference>
<dbReference type="NCBIfam" id="TIGR00060">
    <property type="entry name" value="L18_bact"/>
    <property type="match status" value="1"/>
</dbReference>
<dbReference type="PANTHER" id="PTHR12899">
    <property type="entry name" value="39S RIBOSOMAL PROTEIN L18, MITOCHONDRIAL"/>
    <property type="match status" value="1"/>
</dbReference>
<dbReference type="PANTHER" id="PTHR12899:SF3">
    <property type="entry name" value="LARGE RIBOSOMAL SUBUNIT PROTEIN UL18M"/>
    <property type="match status" value="1"/>
</dbReference>
<dbReference type="Pfam" id="PF00861">
    <property type="entry name" value="Ribosomal_L18p"/>
    <property type="match status" value="1"/>
</dbReference>
<dbReference type="SUPFAM" id="SSF53137">
    <property type="entry name" value="Translational machinery components"/>
    <property type="match status" value="1"/>
</dbReference>